<comment type="function">
    <text evidence="1">Catalyzes the GTP-dependent ribosomal translocation step during translation elongation. During this step, the ribosome changes from the pre-translocational (PRE) to the post-translocational (POST) state as the newly formed A-site-bound peptidyl-tRNA and P-site-bound deacylated tRNA move to the P and E sites, respectively. Catalyzes the coordinated movement of the two tRNA molecules, the mRNA and conformational changes in the ribosome.</text>
</comment>
<comment type="subcellular location">
    <subcellularLocation>
        <location evidence="1">Cytoplasm</location>
    </subcellularLocation>
</comment>
<comment type="similarity">
    <text evidence="1">Belongs to the TRAFAC class translation factor GTPase superfamily. Classic translation factor GTPase family. EF-G/EF-2 subfamily.</text>
</comment>
<organism>
    <name type="scientific">Methanococcus maripaludis (strain C5 / ATCC BAA-1333)</name>
    <dbReference type="NCBI Taxonomy" id="402880"/>
    <lineage>
        <taxon>Archaea</taxon>
        <taxon>Methanobacteriati</taxon>
        <taxon>Methanobacteriota</taxon>
        <taxon>Methanomada group</taxon>
        <taxon>Methanococci</taxon>
        <taxon>Methanococcales</taxon>
        <taxon>Methanococcaceae</taxon>
        <taxon>Methanococcus</taxon>
    </lineage>
</organism>
<feature type="chain" id="PRO_1000008846" description="Elongation factor 2">
    <location>
        <begin position="1"/>
        <end position="727"/>
    </location>
</feature>
<feature type="domain" description="tr-type G">
    <location>
        <begin position="19"/>
        <end position="260"/>
    </location>
</feature>
<feature type="binding site" evidence="1">
    <location>
        <begin position="28"/>
        <end position="35"/>
    </location>
    <ligand>
        <name>GTP</name>
        <dbReference type="ChEBI" id="CHEBI:37565"/>
    </ligand>
</feature>
<feature type="binding site" evidence="1">
    <location>
        <begin position="94"/>
        <end position="98"/>
    </location>
    <ligand>
        <name>GTP</name>
        <dbReference type="ChEBI" id="CHEBI:37565"/>
    </ligand>
</feature>
<feature type="binding site" evidence="1">
    <location>
        <begin position="148"/>
        <end position="151"/>
    </location>
    <ligand>
        <name>GTP</name>
        <dbReference type="ChEBI" id="CHEBI:37565"/>
    </ligand>
</feature>
<feature type="modified residue" description="Diphthamide" evidence="1">
    <location>
        <position position="603"/>
    </location>
</feature>
<evidence type="ECO:0000255" key="1">
    <source>
        <dbReference type="HAMAP-Rule" id="MF_00054"/>
    </source>
</evidence>
<proteinExistence type="inferred from homology"/>
<gene>
    <name evidence="1" type="primary">fusA</name>
    <name type="ordered locus">MmarC5_0209</name>
</gene>
<dbReference type="EMBL" id="CP000609">
    <property type="protein sequence ID" value="ABO34525.1"/>
    <property type="molecule type" value="Genomic_DNA"/>
</dbReference>
<dbReference type="RefSeq" id="WP_011867983.1">
    <property type="nucleotide sequence ID" value="NC_009135.1"/>
</dbReference>
<dbReference type="SMR" id="A4FWF0"/>
<dbReference type="STRING" id="402880.MmarC5_0209"/>
<dbReference type="GeneID" id="4928156"/>
<dbReference type="KEGG" id="mmq:MmarC5_0209"/>
<dbReference type="eggNOG" id="arCOG01559">
    <property type="taxonomic scope" value="Archaea"/>
</dbReference>
<dbReference type="HOGENOM" id="CLU_002794_11_1_2"/>
<dbReference type="OrthoDB" id="6290at2157"/>
<dbReference type="Proteomes" id="UP000000253">
    <property type="component" value="Chromosome"/>
</dbReference>
<dbReference type="GO" id="GO:0005829">
    <property type="term" value="C:cytosol"/>
    <property type="evidence" value="ECO:0007669"/>
    <property type="project" value="TreeGrafter"/>
</dbReference>
<dbReference type="GO" id="GO:1990904">
    <property type="term" value="C:ribonucleoprotein complex"/>
    <property type="evidence" value="ECO:0007669"/>
    <property type="project" value="TreeGrafter"/>
</dbReference>
<dbReference type="GO" id="GO:0005525">
    <property type="term" value="F:GTP binding"/>
    <property type="evidence" value="ECO:0007669"/>
    <property type="project" value="UniProtKB-UniRule"/>
</dbReference>
<dbReference type="GO" id="GO:0003924">
    <property type="term" value="F:GTPase activity"/>
    <property type="evidence" value="ECO:0007669"/>
    <property type="project" value="InterPro"/>
</dbReference>
<dbReference type="GO" id="GO:0003746">
    <property type="term" value="F:translation elongation factor activity"/>
    <property type="evidence" value="ECO:0007669"/>
    <property type="project" value="UniProtKB-UniRule"/>
</dbReference>
<dbReference type="CDD" id="cd01681">
    <property type="entry name" value="aeEF2_snRNP_like_IV"/>
    <property type="match status" value="1"/>
</dbReference>
<dbReference type="CDD" id="cd01885">
    <property type="entry name" value="EF2"/>
    <property type="match status" value="1"/>
</dbReference>
<dbReference type="CDD" id="cd16268">
    <property type="entry name" value="EF2_II"/>
    <property type="match status" value="1"/>
</dbReference>
<dbReference type="CDD" id="cd16261">
    <property type="entry name" value="EF2_snRNP_III"/>
    <property type="match status" value="1"/>
</dbReference>
<dbReference type="CDD" id="cd01514">
    <property type="entry name" value="Elongation_Factor_C"/>
    <property type="match status" value="1"/>
</dbReference>
<dbReference type="FunFam" id="3.40.50.300:FF:000684">
    <property type="entry name" value="Elongation factor 2"/>
    <property type="match status" value="1"/>
</dbReference>
<dbReference type="FunFam" id="3.30.70.240:FF:000001">
    <property type="entry name" value="Elongation factor G"/>
    <property type="match status" value="1"/>
</dbReference>
<dbReference type="FunFam" id="3.30.70.870:FF:000002">
    <property type="entry name" value="Translation elongation factor 2"/>
    <property type="match status" value="1"/>
</dbReference>
<dbReference type="Gene3D" id="3.30.230.10">
    <property type="match status" value="1"/>
</dbReference>
<dbReference type="Gene3D" id="3.30.70.240">
    <property type="match status" value="1"/>
</dbReference>
<dbReference type="Gene3D" id="3.30.70.870">
    <property type="entry name" value="Elongation Factor G (Translational Gtpase), domain 3"/>
    <property type="match status" value="1"/>
</dbReference>
<dbReference type="Gene3D" id="3.40.50.300">
    <property type="entry name" value="P-loop containing nucleotide triphosphate hydrolases"/>
    <property type="match status" value="1"/>
</dbReference>
<dbReference type="Gene3D" id="2.40.30.10">
    <property type="entry name" value="Translation factors"/>
    <property type="match status" value="1"/>
</dbReference>
<dbReference type="HAMAP" id="MF_00054_A">
    <property type="entry name" value="EF_G_EF_2_A"/>
    <property type="match status" value="1"/>
</dbReference>
<dbReference type="InterPro" id="IPR053905">
    <property type="entry name" value="EF-G-like_DII"/>
</dbReference>
<dbReference type="InterPro" id="IPR041095">
    <property type="entry name" value="EFG_II"/>
</dbReference>
<dbReference type="InterPro" id="IPR035647">
    <property type="entry name" value="EFG_III/V"/>
</dbReference>
<dbReference type="InterPro" id="IPR000640">
    <property type="entry name" value="EFG_V-like"/>
</dbReference>
<dbReference type="InterPro" id="IPR031157">
    <property type="entry name" value="G_TR_CS"/>
</dbReference>
<dbReference type="InterPro" id="IPR027417">
    <property type="entry name" value="P-loop_NTPase"/>
</dbReference>
<dbReference type="InterPro" id="IPR020568">
    <property type="entry name" value="Ribosomal_Su5_D2-typ_SF"/>
</dbReference>
<dbReference type="InterPro" id="IPR014721">
    <property type="entry name" value="Ribsml_uS5_D2-typ_fold_subgr"/>
</dbReference>
<dbReference type="InterPro" id="IPR005225">
    <property type="entry name" value="Small_GTP-bd"/>
</dbReference>
<dbReference type="InterPro" id="IPR000795">
    <property type="entry name" value="T_Tr_GTP-bd_dom"/>
</dbReference>
<dbReference type="InterPro" id="IPR009000">
    <property type="entry name" value="Transl_B-barrel_sf"/>
</dbReference>
<dbReference type="InterPro" id="IPR004543">
    <property type="entry name" value="Transl_elong_EFG/EF2_arc"/>
</dbReference>
<dbReference type="InterPro" id="IPR005517">
    <property type="entry name" value="Transl_elong_EFG/EF2_IV"/>
</dbReference>
<dbReference type="NCBIfam" id="TIGR00490">
    <property type="entry name" value="aEF-2"/>
    <property type="match status" value="1"/>
</dbReference>
<dbReference type="NCBIfam" id="TIGR00231">
    <property type="entry name" value="small_GTP"/>
    <property type="match status" value="1"/>
</dbReference>
<dbReference type="PANTHER" id="PTHR42908:SF3">
    <property type="entry name" value="ELONGATION FACTOR-LIKE GTPASE 1"/>
    <property type="match status" value="1"/>
</dbReference>
<dbReference type="PANTHER" id="PTHR42908">
    <property type="entry name" value="TRANSLATION ELONGATION FACTOR-RELATED"/>
    <property type="match status" value="1"/>
</dbReference>
<dbReference type="Pfam" id="PF22042">
    <property type="entry name" value="EF-G_D2"/>
    <property type="match status" value="1"/>
</dbReference>
<dbReference type="Pfam" id="PF00679">
    <property type="entry name" value="EFG_C"/>
    <property type="match status" value="1"/>
</dbReference>
<dbReference type="Pfam" id="PF14492">
    <property type="entry name" value="EFG_III"/>
    <property type="match status" value="1"/>
</dbReference>
<dbReference type="Pfam" id="PF03764">
    <property type="entry name" value="EFG_IV"/>
    <property type="match status" value="1"/>
</dbReference>
<dbReference type="Pfam" id="PF00009">
    <property type="entry name" value="GTP_EFTU"/>
    <property type="match status" value="1"/>
</dbReference>
<dbReference type="PRINTS" id="PR00315">
    <property type="entry name" value="ELONGATNFCT"/>
</dbReference>
<dbReference type="SMART" id="SM00838">
    <property type="entry name" value="EFG_C"/>
    <property type="match status" value="1"/>
</dbReference>
<dbReference type="SMART" id="SM00889">
    <property type="entry name" value="EFG_IV"/>
    <property type="match status" value="1"/>
</dbReference>
<dbReference type="SUPFAM" id="SSF54980">
    <property type="entry name" value="EF-G C-terminal domain-like"/>
    <property type="match status" value="2"/>
</dbReference>
<dbReference type="SUPFAM" id="SSF52540">
    <property type="entry name" value="P-loop containing nucleoside triphosphate hydrolases"/>
    <property type="match status" value="1"/>
</dbReference>
<dbReference type="SUPFAM" id="SSF54211">
    <property type="entry name" value="Ribosomal protein S5 domain 2-like"/>
    <property type="match status" value="1"/>
</dbReference>
<dbReference type="SUPFAM" id="SSF50447">
    <property type="entry name" value="Translation proteins"/>
    <property type="match status" value="1"/>
</dbReference>
<dbReference type="PROSITE" id="PS00301">
    <property type="entry name" value="G_TR_1"/>
    <property type="match status" value="1"/>
</dbReference>
<dbReference type="PROSITE" id="PS51722">
    <property type="entry name" value="G_TR_2"/>
    <property type="match status" value="1"/>
</dbReference>
<reference key="1">
    <citation type="submission" date="2007-03" db="EMBL/GenBank/DDBJ databases">
        <title>Complete sequence of chromosome of Methanococcus maripaludis C5.</title>
        <authorList>
            <consortium name="US DOE Joint Genome Institute"/>
            <person name="Copeland A."/>
            <person name="Lucas S."/>
            <person name="Lapidus A."/>
            <person name="Barry K."/>
            <person name="Glavina del Rio T."/>
            <person name="Dalin E."/>
            <person name="Tice H."/>
            <person name="Pitluck S."/>
            <person name="Chertkov O."/>
            <person name="Brettin T."/>
            <person name="Bruce D."/>
            <person name="Han C."/>
            <person name="Detter J.C."/>
            <person name="Schmutz J."/>
            <person name="Larimer F."/>
            <person name="Land M."/>
            <person name="Hauser L."/>
            <person name="Kyrpides N."/>
            <person name="Mikhailova N."/>
            <person name="Sieprawska-Lupa M."/>
            <person name="Whitman W.B."/>
            <person name="Richardson P."/>
        </authorList>
    </citation>
    <scope>NUCLEOTIDE SEQUENCE [LARGE SCALE GENOMIC DNA]</scope>
    <source>
        <strain>C5 / ATCC BAA-1333</strain>
    </source>
</reference>
<accession>A4FWF0</accession>
<protein>
    <recommendedName>
        <fullName evidence="1">Elongation factor 2</fullName>
        <shortName evidence="1">EF-2</shortName>
    </recommendedName>
</protein>
<sequence length="727" mass="80009">MGRRAKMVEKVKTLMETHDQIRNMGICAHIDHGKTTLSDNLLAGAGMISKELAGDQLALDFDEEEAARGITIYAANVSMVHEYGGKEYLINLIDTPGHVDFGGDVTRAMRAIDGAVVVCCAVEGVMPQTETVLRQALKEKVKPVLFINKVDRLINELKLTPEELQGRFMKIIAEVNKLIEKMAPEEFKTEWLCDVANGKVAFGSAYNNWAISVPYMQRSGISFKDIIDYCEQEKQGELADKAPLHEVVLDMSIKHLPNPLQAQKYRIPNIWKGDAESAIGKSMVECNPNGPLAGVVTKIIVDKHAGAISACRLFSGRIKQGDDLYLVGSKQKARAQQVSIFMGAERVQVPSISAGNICALTGLREATAGETVCSPSEILEPGFESLSHTSEPVITVAIEAKNTKDLPKLIEILRQIAREDNTVRVEINEETGEHLISGMGELHIEVITNTKIGRDGGIEVDVGEPIVVYRETIMGTSPEIEGKSPNKHNKLYMIAEPMEESVYAAYVEGKLHDEDYKKKTTADGEARLVEAGLEKDQAKKVMSIYNGNMIVNMTRGIVQLDEARELIIEGFKEGVRNGPLAAEKVQGVKIKLMDATFHEDAIHRGPAQIIPAVRFGVRDAVSQAKPVLLEPMQSVYINTPQDYMGDGMKEINNRRGQILDMEQEGDMSIIKSSVPVAEMFGFAGAIRGATQGRCLWSVEFSGFEKVPGELQPKIVKQIRDRKGLKSE</sequence>
<keyword id="KW-0963">Cytoplasm</keyword>
<keyword id="KW-0251">Elongation factor</keyword>
<keyword id="KW-0342">GTP-binding</keyword>
<keyword id="KW-0547">Nucleotide-binding</keyword>
<keyword id="KW-0648">Protein biosynthesis</keyword>
<name>EF2_METM5</name>